<name>ODPX_MESAU</name>
<sequence>FRLSPAARNILEKHSLDASQGTATGPR</sequence>
<dbReference type="SMR" id="P86238"/>
<dbReference type="STRING" id="10036.ENSMAUP00000002948"/>
<dbReference type="eggNOG" id="KOG0557">
    <property type="taxonomic scope" value="Eukaryota"/>
</dbReference>
<dbReference type="Proteomes" id="UP000189706">
    <property type="component" value="Unplaced"/>
</dbReference>
<dbReference type="GO" id="GO:0005759">
    <property type="term" value="C:mitochondrial matrix"/>
    <property type="evidence" value="ECO:0007669"/>
    <property type="project" value="UniProtKB-SubCell"/>
</dbReference>
<dbReference type="GO" id="GO:0016746">
    <property type="term" value="F:acyltransferase activity"/>
    <property type="evidence" value="ECO:0007669"/>
    <property type="project" value="InterPro"/>
</dbReference>
<dbReference type="Gene3D" id="4.10.320.10">
    <property type="entry name" value="E3-binding domain"/>
    <property type="match status" value="1"/>
</dbReference>
<dbReference type="InterPro" id="IPR036625">
    <property type="entry name" value="E3-bd_dom_sf"/>
</dbReference>
<dbReference type="InterPro" id="IPR004167">
    <property type="entry name" value="PSBD"/>
</dbReference>
<dbReference type="PROSITE" id="PS51826">
    <property type="entry name" value="PSBD"/>
    <property type="match status" value="1"/>
</dbReference>
<protein>
    <recommendedName>
        <fullName evidence="1">Pyruvate dehydrogenase protein X component, mitochondrial</fullName>
    </recommendedName>
    <alternativeName>
        <fullName evidence="1">Dihydrolipoamide dehydrogenase-binding protein of pyruvate dehydrogenase complex</fullName>
    </alternativeName>
    <alternativeName>
        <fullName evidence="1">Lipoyl-containing pyruvate dehydrogenase complex component X</fullName>
    </alternativeName>
</protein>
<accession>P86238</accession>
<feature type="chain" id="PRO_0000394422" description="Pyruvate dehydrogenase protein X component, mitochondrial">
    <location>
        <begin position="1" status="less than"/>
        <end position="27" status="greater than"/>
    </location>
</feature>
<feature type="domain" description="Peripheral subunit-binding (PSBD)" evidence="3">
    <location>
        <begin position="2"/>
        <end position="27" status="greater than"/>
    </location>
</feature>
<feature type="region of interest" description="Disordered" evidence="4">
    <location>
        <begin position="1"/>
        <end position="27"/>
    </location>
</feature>
<feature type="compositionally biased region" description="Polar residues" evidence="4">
    <location>
        <begin position="17"/>
        <end position="27"/>
    </location>
</feature>
<feature type="modified residue" description="N6-acetyllysine" evidence="1">
    <location>
        <position position="13"/>
    </location>
</feature>
<feature type="modified residue" description="Phosphoserine" evidence="1">
    <location>
        <position position="15"/>
    </location>
</feature>
<feature type="non-terminal residue">
    <location>
        <position position="1"/>
    </location>
</feature>
<feature type="non-terminal residue">
    <location>
        <position position="27"/>
    </location>
</feature>
<keyword id="KW-0007">Acetylation</keyword>
<keyword id="KW-0450">Lipoyl</keyword>
<keyword id="KW-0496">Mitochondrion</keyword>
<keyword id="KW-0597">Phosphoprotein</keyword>
<keyword id="KW-1185">Reference proteome</keyword>
<organism>
    <name type="scientific">Mesocricetus auratus</name>
    <name type="common">Golden hamster</name>
    <dbReference type="NCBI Taxonomy" id="10036"/>
    <lineage>
        <taxon>Eukaryota</taxon>
        <taxon>Metazoa</taxon>
        <taxon>Chordata</taxon>
        <taxon>Craniata</taxon>
        <taxon>Vertebrata</taxon>
        <taxon>Euteleostomi</taxon>
        <taxon>Mammalia</taxon>
        <taxon>Eutheria</taxon>
        <taxon>Euarchontoglires</taxon>
        <taxon>Glires</taxon>
        <taxon>Rodentia</taxon>
        <taxon>Myomorpha</taxon>
        <taxon>Muroidea</taxon>
        <taxon>Cricetidae</taxon>
        <taxon>Cricetinae</taxon>
        <taxon>Mesocricetus</taxon>
    </lineage>
</organism>
<proteinExistence type="evidence at protein level"/>
<reference key="1">
    <citation type="journal article" date="2010" name="Asian J. Androl.">
        <title>Glucose-regulated protein precursor (GRP78) and tumor rejection antigen (GP96) are unique to hamster caput epididymal spermatozoa.</title>
        <authorList>
            <person name="Kameshwari D.B."/>
            <person name="Bhande S."/>
            <person name="Sundaram C.S."/>
            <person name="Kota V."/>
            <person name="Siva A.B."/>
            <person name="Shivaji S."/>
        </authorList>
    </citation>
    <scope>IDENTIFICATION BY MASS SPECTROMETRY</scope>
</reference>
<comment type="function">
    <text evidence="1">Required for anchoring dihydrolipoamide dehydrogenase (E3) to the dihydrolipoamide transacetylase (E2) core of the pyruvate dehydrogenase complexes of eukaryotes. This specific binding is essential for a functional PDH complex (By similarity).</text>
</comment>
<comment type="subunit">
    <text evidence="1">Part of the inner core of the multimeric pyruvate dehydrogenase complex that is composed of about 48 DLAT and 12 PDHX molecules. This core binds multiple copies of pyruvate dehydrogenase (subunits PDH1A and PDHB, E1), dihydrolipoamide acetyltransferase (DLAT, E2) and lipoamide dehydrogenase (DLD, E3). Interacts with SIRT4. Interacts with DLD.</text>
</comment>
<comment type="subcellular location">
    <subcellularLocation>
        <location evidence="1">Mitochondrion matrix</location>
    </subcellularLocation>
</comment>
<comment type="similarity">
    <text evidence="2">Belongs to the 2-oxoacid dehydrogenase family.</text>
</comment>
<evidence type="ECO:0000250" key="1">
    <source>
        <dbReference type="UniProtKB" id="O00330"/>
    </source>
</evidence>
<evidence type="ECO:0000255" key="2"/>
<evidence type="ECO:0000255" key="3">
    <source>
        <dbReference type="PROSITE-ProRule" id="PRU01170"/>
    </source>
</evidence>
<evidence type="ECO:0000256" key="4">
    <source>
        <dbReference type="SAM" id="MobiDB-lite"/>
    </source>
</evidence>
<gene>
    <name evidence="1" type="primary">PDHX</name>
</gene>